<sequence length="168" mass="19553">MPRSRINGNFIDKTFSIVANILLRVIPTTSGEKEAFTYYRDGMSAQSEGNYAEALQNYYEAMRLEIDPYDRSYILYNIGLIHTSNGEHTKALEYYFRALERNPFLPQAFNNMAVICHYRGEQAIQQGDSEIAEAWFDQAAEYWKQAIALTPGNYIEAHNWLKITRRFE</sequence>
<dbReference type="EMBL" id="AB240139">
    <property type="protein sequence ID" value="BAE48000.1"/>
    <property type="molecule type" value="Genomic_DNA"/>
</dbReference>
<dbReference type="RefSeq" id="YP_398862.1">
    <property type="nucleotide sequence ID" value="NC_007602.1"/>
</dbReference>
<dbReference type="SMR" id="Q33C35"/>
<dbReference type="GeneID" id="3776319"/>
<dbReference type="KEGG" id="nto:3776319"/>
<dbReference type="OrthoDB" id="431027at2759"/>
<dbReference type="GO" id="GO:0009535">
    <property type="term" value="C:chloroplast thylakoid membrane"/>
    <property type="evidence" value="ECO:0007669"/>
    <property type="project" value="UniProtKB-SubCell"/>
</dbReference>
<dbReference type="GO" id="GO:0015979">
    <property type="term" value="P:photosynthesis"/>
    <property type="evidence" value="ECO:0007669"/>
    <property type="project" value="UniProtKB-UniRule"/>
</dbReference>
<dbReference type="FunFam" id="1.25.40.10:FF:000004">
    <property type="entry name" value="Photosystem I assembly protein Ycf3"/>
    <property type="match status" value="1"/>
</dbReference>
<dbReference type="Gene3D" id="1.25.40.10">
    <property type="entry name" value="Tetratricopeptide repeat domain"/>
    <property type="match status" value="1"/>
</dbReference>
<dbReference type="HAMAP" id="MF_00439">
    <property type="entry name" value="Ycf3"/>
    <property type="match status" value="1"/>
</dbReference>
<dbReference type="InterPro" id="IPR022818">
    <property type="entry name" value="PSI_Ycf3_assembly"/>
</dbReference>
<dbReference type="InterPro" id="IPR011990">
    <property type="entry name" value="TPR-like_helical_dom_sf"/>
</dbReference>
<dbReference type="InterPro" id="IPR019734">
    <property type="entry name" value="TPR_rpt"/>
</dbReference>
<dbReference type="InterPro" id="IPR051685">
    <property type="entry name" value="Ycf3/AcsC/BcsC/TPR_MFPF"/>
</dbReference>
<dbReference type="NCBIfam" id="NF002725">
    <property type="entry name" value="PRK02603.1"/>
    <property type="match status" value="1"/>
</dbReference>
<dbReference type="PANTHER" id="PTHR44943">
    <property type="entry name" value="CELLULOSE SYNTHASE OPERON PROTEIN C"/>
    <property type="match status" value="1"/>
</dbReference>
<dbReference type="PANTHER" id="PTHR44943:SF8">
    <property type="entry name" value="TPR REPEAT-CONTAINING PROTEIN MJ0263"/>
    <property type="match status" value="1"/>
</dbReference>
<dbReference type="Pfam" id="PF00515">
    <property type="entry name" value="TPR_1"/>
    <property type="match status" value="1"/>
</dbReference>
<dbReference type="SMART" id="SM00028">
    <property type="entry name" value="TPR"/>
    <property type="match status" value="3"/>
</dbReference>
<dbReference type="SUPFAM" id="SSF48452">
    <property type="entry name" value="TPR-like"/>
    <property type="match status" value="1"/>
</dbReference>
<dbReference type="PROSITE" id="PS50005">
    <property type="entry name" value="TPR"/>
    <property type="match status" value="3"/>
</dbReference>
<dbReference type="PROSITE" id="PS50293">
    <property type="entry name" value="TPR_REGION"/>
    <property type="match status" value="2"/>
</dbReference>
<comment type="function">
    <text evidence="1">Essential for the assembly of the photosystem I (PSI) complex. May act as a chaperone-like factor to guide the assembly of the PSI subunits.</text>
</comment>
<comment type="subcellular location">
    <subcellularLocation>
        <location evidence="1">Plastid</location>
        <location evidence="1">Chloroplast thylakoid membrane</location>
        <topology evidence="1">Peripheral membrane protein</topology>
    </subcellularLocation>
</comment>
<comment type="similarity">
    <text evidence="1">Belongs to the Ycf3 family.</text>
</comment>
<organism>
    <name type="scientific">Nicotiana tomentosiformis</name>
    <name type="common">Tobacco</name>
    <dbReference type="NCBI Taxonomy" id="4098"/>
    <lineage>
        <taxon>Eukaryota</taxon>
        <taxon>Viridiplantae</taxon>
        <taxon>Streptophyta</taxon>
        <taxon>Embryophyta</taxon>
        <taxon>Tracheophyta</taxon>
        <taxon>Spermatophyta</taxon>
        <taxon>Magnoliopsida</taxon>
        <taxon>eudicotyledons</taxon>
        <taxon>Gunneridae</taxon>
        <taxon>Pentapetalae</taxon>
        <taxon>asterids</taxon>
        <taxon>lamiids</taxon>
        <taxon>Solanales</taxon>
        <taxon>Solanaceae</taxon>
        <taxon>Nicotianoideae</taxon>
        <taxon>Nicotianeae</taxon>
        <taxon>Nicotiana</taxon>
    </lineage>
</organism>
<proteinExistence type="inferred from homology"/>
<keyword id="KW-0150">Chloroplast</keyword>
<keyword id="KW-0472">Membrane</keyword>
<keyword id="KW-0602">Photosynthesis</keyword>
<keyword id="KW-0934">Plastid</keyword>
<keyword id="KW-0677">Repeat</keyword>
<keyword id="KW-0793">Thylakoid</keyword>
<keyword id="KW-0802">TPR repeat</keyword>
<protein>
    <recommendedName>
        <fullName evidence="1">Photosystem I assembly protein Ycf3</fullName>
    </recommendedName>
</protein>
<geneLocation type="chloroplast"/>
<reference key="1">
    <citation type="journal article" date="2006" name="Mol. Genet. Genomics">
        <title>The chloroplast genome of Nicotiana sylvestris and Nicotiana tomentosiformis: complete sequencing confirms that the Nicotiana sylvestris progenitor is the maternal genome donor of Nicotiana tabacum.</title>
        <authorList>
            <person name="Yukawa M."/>
            <person name="Tsudzuki T."/>
            <person name="Sugiura M."/>
        </authorList>
    </citation>
    <scope>NUCLEOTIDE SEQUENCE [LARGE SCALE GENOMIC DNA]</scope>
</reference>
<name>YCF3_NICTO</name>
<feature type="chain" id="PRO_0000275627" description="Photosystem I assembly protein Ycf3">
    <location>
        <begin position="1"/>
        <end position="168"/>
    </location>
</feature>
<feature type="repeat" description="TPR 1">
    <location>
        <begin position="35"/>
        <end position="68"/>
    </location>
</feature>
<feature type="repeat" description="TPR 2">
    <location>
        <begin position="72"/>
        <end position="105"/>
    </location>
</feature>
<feature type="repeat" description="TPR 3">
    <location>
        <begin position="120"/>
        <end position="153"/>
    </location>
</feature>
<accession>Q33C35</accession>
<evidence type="ECO:0000255" key="1">
    <source>
        <dbReference type="HAMAP-Rule" id="MF_00439"/>
    </source>
</evidence>
<gene>
    <name evidence="1" type="primary">ycf3</name>
</gene>